<accession>P84912</accession>
<feature type="peptide" id="PRO_0000248509" description="Rugosin A-like peptide" evidence="3">
    <location>
        <begin position="1"/>
        <end position="19"/>
    </location>
</feature>
<feature type="disulfide bond" evidence="1">
    <location>
        <begin position="13"/>
        <end position="19"/>
    </location>
</feature>
<evidence type="ECO:0000250" key="1">
    <source>
        <dbReference type="UniProtKB" id="P80954"/>
    </source>
</evidence>
<evidence type="ECO:0000255" key="2"/>
<evidence type="ECO:0000269" key="3">
    <source>
    </source>
</evidence>
<evidence type="ECO:0000305" key="4"/>
<comment type="function">
    <text evidence="1 3">Stimulates insulin release by BRIN-BD11 cells in vitro. Has antibacterial activity.</text>
</comment>
<comment type="subcellular location">
    <subcellularLocation>
        <location evidence="3">Secreted</location>
    </subcellularLocation>
</comment>
<comment type="tissue specificity">
    <text evidence="3">Expressed by the skin glands.</text>
</comment>
<comment type="mass spectrometry"/>
<comment type="similarity">
    <text evidence="2">Belongs to the frog skin active peptide (FSAP) family. Brevinin subfamily.</text>
</comment>
<proteinExistence type="evidence at protein level"/>
<dbReference type="GO" id="GO:0005576">
    <property type="term" value="C:extracellular region"/>
    <property type="evidence" value="ECO:0007669"/>
    <property type="project" value="UniProtKB-SubCell"/>
</dbReference>
<dbReference type="GO" id="GO:0042742">
    <property type="term" value="P:defense response to bacterium"/>
    <property type="evidence" value="ECO:0007669"/>
    <property type="project" value="UniProtKB-KW"/>
</dbReference>
<dbReference type="InterPro" id="IPR012521">
    <property type="entry name" value="Antimicrobial_frog_2"/>
</dbReference>
<dbReference type="Pfam" id="PF08023">
    <property type="entry name" value="Antimicrobial_2"/>
    <property type="match status" value="1"/>
</dbReference>
<name>RUGA_PELSA</name>
<keyword id="KW-0878">Amphibian defense peptide</keyword>
<keyword id="KW-0044">Antibiotic</keyword>
<keyword id="KW-0929">Antimicrobial</keyword>
<keyword id="KW-0903">Direct protein sequencing</keyword>
<keyword id="KW-1015">Disulfide bond</keyword>
<keyword id="KW-0964">Secreted</keyword>
<protein>
    <recommendedName>
        <fullName>Rugosin A-like peptide</fullName>
    </recommendedName>
</protein>
<sequence>KGAAKGLLEVASCKLSKSC</sequence>
<organism>
    <name type="scientific">Pelophylax saharicus</name>
    <name type="common">Sahara frog</name>
    <name type="synonym">Rana saharica</name>
    <dbReference type="NCBI Taxonomy" id="70019"/>
    <lineage>
        <taxon>Eukaryota</taxon>
        <taxon>Metazoa</taxon>
        <taxon>Chordata</taxon>
        <taxon>Craniata</taxon>
        <taxon>Vertebrata</taxon>
        <taxon>Euteleostomi</taxon>
        <taxon>Amphibia</taxon>
        <taxon>Batrachia</taxon>
        <taxon>Anura</taxon>
        <taxon>Neobatrachia</taxon>
        <taxon>Ranoidea</taxon>
        <taxon>Ranidae</taxon>
        <taxon>Pelophylax</taxon>
    </lineage>
</organism>
<reference evidence="4" key="1">
    <citation type="journal article" date="2005" name="Peptides">
        <title>Isolation and structural characterization of novel Rugosin A-like insulinotropic peptide from the skin secretions of Rana saharica frog.</title>
        <authorList>
            <person name="Marenah L."/>
            <person name="Flatt P.R."/>
            <person name="Orr D.F."/>
            <person name="Shaw C."/>
            <person name="Abdel-Wahab Y.H.A."/>
        </authorList>
    </citation>
    <scope>PROTEIN SEQUENCE</scope>
    <scope>FUNCTION</scope>
    <scope>SUBCELLULAR LOCATION</scope>
    <scope>TISSUE SPECIFICITY</scope>
    <scope>MASS SPECTROMETRY</scope>
    <source>
        <tissue evidence="3">Skin secretion</tissue>
    </source>
</reference>